<reference key="1">
    <citation type="journal article" date="2009" name="Stand. Genomic Sci.">
        <title>Complete genome sequence of Beutenbergia cavernae type strain (HKI 0122).</title>
        <authorList>
            <person name="Land M."/>
            <person name="Pukall R."/>
            <person name="Abt B."/>
            <person name="Goker M."/>
            <person name="Rohde M."/>
            <person name="Glavina Del Rio T."/>
            <person name="Tice H."/>
            <person name="Copeland A."/>
            <person name="Cheng J.F."/>
            <person name="Lucas S."/>
            <person name="Chen F."/>
            <person name="Nolan M."/>
            <person name="Bruce D."/>
            <person name="Goodwin L."/>
            <person name="Pitluck S."/>
            <person name="Ivanova N."/>
            <person name="Mavromatis K."/>
            <person name="Ovchinnikova G."/>
            <person name="Pati A."/>
            <person name="Chen A."/>
            <person name="Palaniappan K."/>
            <person name="Hauser L."/>
            <person name="Chang Y.J."/>
            <person name="Jefferies C.C."/>
            <person name="Saunders E."/>
            <person name="Brettin T."/>
            <person name="Detter J.C."/>
            <person name="Han C."/>
            <person name="Chain P."/>
            <person name="Bristow J."/>
            <person name="Eisen J.A."/>
            <person name="Markowitz V."/>
            <person name="Hugenholtz P."/>
            <person name="Kyrpides N.C."/>
            <person name="Klenk H.P."/>
            <person name="Lapidus A."/>
        </authorList>
    </citation>
    <scope>NUCLEOTIDE SEQUENCE [LARGE SCALE GENOMIC DNA]</scope>
    <source>
        <strain>ATCC BAA-8 / DSM 12333 / CCUG 43141 / JCM 11478 / NBRC 16432 / NCIMB 13614 / HKI 0122</strain>
    </source>
</reference>
<dbReference type="EC" id="2.4.2.9" evidence="1"/>
<dbReference type="EMBL" id="CP001618">
    <property type="protein sequence ID" value="ACQ78778.1"/>
    <property type="molecule type" value="Genomic_DNA"/>
</dbReference>
<dbReference type="RefSeq" id="WP_012725558.1">
    <property type="nucleotide sequence ID" value="NC_012669.1"/>
</dbReference>
<dbReference type="SMR" id="C5BXA3"/>
<dbReference type="STRING" id="471853.Bcav_0515"/>
<dbReference type="KEGG" id="bcv:Bcav_0515"/>
<dbReference type="eggNOG" id="COG0035">
    <property type="taxonomic scope" value="Bacteria"/>
</dbReference>
<dbReference type="HOGENOM" id="CLU_067096_2_3_11"/>
<dbReference type="OrthoDB" id="9781675at2"/>
<dbReference type="UniPathway" id="UPA00574">
    <property type="reaction ID" value="UER00636"/>
</dbReference>
<dbReference type="Proteomes" id="UP000007962">
    <property type="component" value="Chromosome"/>
</dbReference>
<dbReference type="GO" id="GO:0005525">
    <property type="term" value="F:GTP binding"/>
    <property type="evidence" value="ECO:0007669"/>
    <property type="project" value="UniProtKB-KW"/>
</dbReference>
<dbReference type="GO" id="GO:0000287">
    <property type="term" value="F:magnesium ion binding"/>
    <property type="evidence" value="ECO:0007669"/>
    <property type="project" value="UniProtKB-UniRule"/>
</dbReference>
<dbReference type="GO" id="GO:0004845">
    <property type="term" value="F:uracil phosphoribosyltransferase activity"/>
    <property type="evidence" value="ECO:0007669"/>
    <property type="project" value="UniProtKB-UniRule"/>
</dbReference>
<dbReference type="GO" id="GO:0044206">
    <property type="term" value="P:UMP salvage"/>
    <property type="evidence" value="ECO:0007669"/>
    <property type="project" value="UniProtKB-UniRule"/>
</dbReference>
<dbReference type="GO" id="GO:0006223">
    <property type="term" value="P:uracil salvage"/>
    <property type="evidence" value="ECO:0007669"/>
    <property type="project" value="InterPro"/>
</dbReference>
<dbReference type="CDD" id="cd06223">
    <property type="entry name" value="PRTases_typeI"/>
    <property type="match status" value="1"/>
</dbReference>
<dbReference type="FunFam" id="3.40.50.2020:FF:000003">
    <property type="entry name" value="Uracil phosphoribosyltransferase"/>
    <property type="match status" value="1"/>
</dbReference>
<dbReference type="Gene3D" id="3.40.50.2020">
    <property type="match status" value="1"/>
</dbReference>
<dbReference type="HAMAP" id="MF_01218_B">
    <property type="entry name" value="Upp_B"/>
    <property type="match status" value="1"/>
</dbReference>
<dbReference type="InterPro" id="IPR000836">
    <property type="entry name" value="PRibTrfase_dom"/>
</dbReference>
<dbReference type="InterPro" id="IPR029057">
    <property type="entry name" value="PRTase-like"/>
</dbReference>
<dbReference type="InterPro" id="IPR034332">
    <property type="entry name" value="Upp_B"/>
</dbReference>
<dbReference type="InterPro" id="IPR050054">
    <property type="entry name" value="UPRTase/APRTase"/>
</dbReference>
<dbReference type="InterPro" id="IPR005765">
    <property type="entry name" value="Ura_phspho_trans"/>
</dbReference>
<dbReference type="NCBIfam" id="NF001097">
    <property type="entry name" value="PRK00129.1"/>
    <property type="match status" value="1"/>
</dbReference>
<dbReference type="NCBIfam" id="TIGR01091">
    <property type="entry name" value="upp"/>
    <property type="match status" value="1"/>
</dbReference>
<dbReference type="PANTHER" id="PTHR32315">
    <property type="entry name" value="ADENINE PHOSPHORIBOSYLTRANSFERASE"/>
    <property type="match status" value="1"/>
</dbReference>
<dbReference type="PANTHER" id="PTHR32315:SF4">
    <property type="entry name" value="URACIL PHOSPHORIBOSYLTRANSFERASE, CHLOROPLASTIC"/>
    <property type="match status" value="1"/>
</dbReference>
<dbReference type="Pfam" id="PF14681">
    <property type="entry name" value="UPRTase"/>
    <property type="match status" value="1"/>
</dbReference>
<dbReference type="SUPFAM" id="SSF53271">
    <property type="entry name" value="PRTase-like"/>
    <property type="match status" value="1"/>
</dbReference>
<gene>
    <name evidence="1" type="primary">upp</name>
    <name type="ordered locus">Bcav_0515</name>
</gene>
<name>UPP_BEUC1</name>
<evidence type="ECO:0000255" key="1">
    <source>
        <dbReference type="HAMAP-Rule" id="MF_01218"/>
    </source>
</evidence>
<comment type="function">
    <text evidence="1">Catalyzes the conversion of uracil and 5-phospho-alpha-D-ribose 1-diphosphate (PRPP) to UMP and diphosphate.</text>
</comment>
<comment type="catalytic activity">
    <reaction evidence="1">
        <text>UMP + diphosphate = 5-phospho-alpha-D-ribose 1-diphosphate + uracil</text>
        <dbReference type="Rhea" id="RHEA:13017"/>
        <dbReference type="ChEBI" id="CHEBI:17568"/>
        <dbReference type="ChEBI" id="CHEBI:33019"/>
        <dbReference type="ChEBI" id="CHEBI:57865"/>
        <dbReference type="ChEBI" id="CHEBI:58017"/>
        <dbReference type="EC" id="2.4.2.9"/>
    </reaction>
</comment>
<comment type="cofactor">
    <cofactor evidence="1">
        <name>Mg(2+)</name>
        <dbReference type="ChEBI" id="CHEBI:18420"/>
    </cofactor>
    <text evidence="1">Binds 1 Mg(2+) ion per subunit. The magnesium is bound as Mg-PRPP.</text>
</comment>
<comment type="activity regulation">
    <text evidence="1">Allosterically activated by GTP.</text>
</comment>
<comment type="pathway">
    <text evidence="1">Pyrimidine metabolism; UMP biosynthesis via salvage pathway; UMP from uracil: step 1/1.</text>
</comment>
<comment type="similarity">
    <text evidence="1">Belongs to the UPRTase family.</text>
</comment>
<organism>
    <name type="scientific">Beutenbergia cavernae (strain ATCC BAA-8 / DSM 12333 / CCUG 43141 / JCM 11478 / NBRC 16432 / NCIMB 13614 / HKI 0122)</name>
    <dbReference type="NCBI Taxonomy" id="471853"/>
    <lineage>
        <taxon>Bacteria</taxon>
        <taxon>Bacillati</taxon>
        <taxon>Actinomycetota</taxon>
        <taxon>Actinomycetes</taxon>
        <taxon>Micrococcales</taxon>
        <taxon>Beutenbergiaceae</taxon>
        <taxon>Beutenbergia</taxon>
    </lineage>
</organism>
<sequence length="211" mass="23036">MRVHVADHPLVAHKLTVLRDERTDSPTFRRLTEELVTLLAYEATRDIAVEPREITTPVTTTVGVHLRSPRPMVVPILRAGLGMLEGMTRLLPTAEVGFLGLQRDEETLEAITYANRLPDDLSGRQCFVLDPMLATGGTLVASIEYLFLRGARHVTAICLLAAPEGLRTVEDAVGDRADVTIVTAAVDERLNERGYIVPGLGDAGDRLYGVV</sequence>
<protein>
    <recommendedName>
        <fullName evidence="1">Uracil phosphoribosyltransferase</fullName>
        <ecNumber evidence="1">2.4.2.9</ecNumber>
    </recommendedName>
    <alternativeName>
        <fullName evidence="1">UMP pyrophosphorylase</fullName>
    </alternativeName>
    <alternativeName>
        <fullName evidence="1">UPRTase</fullName>
    </alternativeName>
</protein>
<proteinExistence type="inferred from homology"/>
<accession>C5BXA3</accession>
<keyword id="KW-0021">Allosteric enzyme</keyword>
<keyword id="KW-0328">Glycosyltransferase</keyword>
<keyword id="KW-0342">GTP-binding</keyword>
<keyword id="KW-0460">Magnesium</keyword>
<keyword id="KW-0547">Nucleotide-binding</keyword>
<keyword id="KW-1185">Reference proteome</keyword>
<keyword id="KW-0808">Transferase</keyword>
<feature type="chain" id="PRO_1000213923" description="Uracil phosphoribosyltransferase">
    <location>
        <begin position="1"/>
        <end position="211"/>
    </location>
</feature>
<feature type="binding site" evidence="1">
    <location>
        <position position="78"/>
    </location>
    <ligand>
        <name>5-phospho-alpha-D-ribose 1-diphosphate</name>
        <dbReference type="ChEBI" id="CHEBI:58017"/>
    </ligand>
</feature>
<feature type="binding site" evidence="1">
    <location>
        <position position="103"/>
    </location>
    <ligand>
        <name>5-phospho-alpha-D-ribose 1-diphosphate</name>
        <dbReference type="ChEBI" id="CHEBI:58017"/>
    </ligand>
</feature>
<feature type="binding site" evidence="1">
    <location>
        <begin position="130"/>
        <end position="138"/>
    </location>
    <ligand>
        <name>5-phospho-alpha-D-ribose 1-diphosphate</name>
        <dbReference type="ChEBI" id="CHEBI:58017"/>
    </ligand>
</feature>
<feature type="binding site" evidence="1">
    <location>
        <position position="196"/>
    </location>
    <ligand>
        <name>uracil</name>
        <dbReference type="ChEBI" id="CHEBI:17568"/>
    </ligand>
</feature>
<feature type="binding site" evidence="1">
    <location>
        <begin position="201"/>
        <end position="203"/>
    </location>
    <ligand>
        <name>uracil</name>
        <dbReference type="ChEBI" id="CHEBI:17568"/>
    </ligand>
</feature>
<feature type="binding site" evidence="1">
    <location>
        <position position="202"/>
    </location>
    <ligand>
        <name>5-phospho-alpha-D-ribose 1-diphosphate</name>
        <dbReference type="ChEBI" id="CHEBI:58017"/>
    </ligand>
</feature>